<accession>P31957</accession>
<proteinExistence type="inferred from homology"/>
<dbReference type="EC" id="2.1.3.-"/>
<dbReference type="EMBL" id="X89965">
    <property type="protein sequence ID" value="CAA62004.1"/>
    <property type="molecule type" value="Genomic_DNA"/>
</dbReference>
<dbReference type="EMBL" id="U00090">
    <property type="protein sequence ID" value="AAB91782.1"/>
    <property type="molecule type" value="Genomic_DNA"/>
</dbReference>
<dbReference type="EMBL" id="J03686">
    <property type="protein sequence ID" value="AAA91579.1"/>
    <property type="molecule type" value="Genomic_DNA"/>
</dbReference>
<dbReference type="PIR" id="S58226">
    <property type="entry name" value="S58226"/>
</dbReference>
<dbReference type="RefSeq" id="NP_443985.1">
    <property type="nucleotide sequence ID" value="NC_000914.2"/>
</dbReference>
<dbReference type="RefSeq" id="WP_010875265.1">
    <property type="nucleotide sequence ID" value="NC_000914.2"/>
</dbReference>
<dbReference type="SMR" id="P31957"/>
<dbReference type="KEGG" id="rhi:NGR_a02400"/>
<dbReference type="PATRIC" id="fig|394.7.peg.250"/>
<dbReference type="eggNOG" id="COG2192">
    <property type="taxonomic scope" value="Bacteria"/>
</dbReference>
<dbReference type="HOGENOM" id="CLU_014411_2_2_5"/>
<dbReference type="OrthoDB" id="9780777at2"/>
<dbReference type="Proteomes" id="UP000001054">
    <property type="component" value="Plasmid pNGR234a"/>
</dbReference>
<dbReference type="GO" id="GO:0016740">
    <property type="term" value="F:transferase activity"/>
    <property type="evidence" value="ECO:0007669"/>
    <property type="project" value="UniProtKB-KW"/>
</dbReference>
<dbReference type="GO" id="GO:0009058">
    <property type="term" value="P:biosynthetic process"/>
    <property type="evidence" value="ECO:0007669"/>
    <property type="project" value="InterPro"/>
</dbReference>
<dbReference type="CDD" id="cd24101">
    <property type="entry name" value="ASKHA_NBD_NodU_N"/>
    <property type="match status" value="1"/>
</dbReference>
<dbReference type="Gene3D" id="3.30.420.40">
    <property type="match status" value="2"/>
</dbReference>
<dbReference type="Gene3D" id="3.90.870.20">
    <property type="entry name" value="Carbamoyltransferase, C-terminal domain"/>
    <property type="match status" value="1"/>
</dbReference>
<dbReference type="InterPro" id="IPR031730">
    <property type="entry name" value="Carbam_trans_C"/>
</dbReference>
<dbReference type="InterPro" id="IPR038152">
    <property type="entry name" value="Carbam_trans_C_sf"/>
</dbReference>
<dbReference type="InterPro" id="IPR003696">
    <property type="entry name" value="Carbtransf_dom"/>
</dbReference>
<dbReference type="InterPro" id="IPR051338">
    <property type="entry name" value="NodU/CmcH_Carbamoyltrnsfr"/>
</dbReference>
<dbReference type="InterPro" id="IPR048155">
    <property type="entry name" value="Nodul_NodU"/>
</dbReference>
<dbReference type="NCBIfam" id="NF041651">
    <property type="entry name" value="nodul_NodU"/>
    <property type="match status" value="1"/>
</dbReference>
<dbReference type="PANTHER" id="PTHR34847">
    <property type="entry name" value="NODULATION PROTEIN U"/>
    <property type="match status" value="1"/>
</dbReference>
<dbReference type="PANTHER" id="PTHR34847:SF1">
    <property type="entry name" value="NODULATION PROTEIN U"/>
    <property type="match status" value="1"/>
</dbReference>
<dbReference type="Pfam" id="PF16861">
    <property type="entry name" value="Carbam_trans_C"/>
    <property type="match status" value="1"/>
</dbReference>
<dbReference type="Pfam" id="PF02543">
    <property type="entry name" value="Carbam_trans_N"/>
    <property type="match status" value="1"/>
</dbReference>
<evidence type="ECO:0000305" key="1"/>
<name>NODU_SINFN</name>
<reference key="1">
    <citation type="journal article" date="1995" name="J. Biol. Chem.">
        <title>Involvement of nodS in N-methylation and nodU in 6-O-carbamoylation of Rhizobium sp. NGR234 nod factors.</title>
        <authorList>
            <person name="Jabbouri S."/>
            <person name="Fellay R.A."/>
            <person name="Talmont F."/>
            <person name="Kamalaprija P."/>
            <person name="Burger U."/>
            <person name="Relic B."/>
            <person name="Prome J.-C."/>
            <person name="Broughton W.J."/>
        </authorList>
    </citation>
    <scope>NUCLEOTIDE SEQUENCE [GENOMIC DNA]</scope>
</reference>
<reference key="2">
    <citation type="journal article" date="1997" name="Nature">
        <title>Molecular basis of symbiosis between Rhizobium and legumes.</title>
        <authorList>
            <person name="Freiberg C.A."/>
            <person name="Fellay R."/>
            <person name="Bairoch A."/>
            <person name="Broughton W.J."/>
            <person name="Rosenthal A."/>
            <person name="Perret X."/>
        </authorList>
    </citation>
    <scope>NUCLEOTIDE SEQUENCE [LARGE SCALE GENOMIC DNA]</scope>
    <source>
        <strain>NBRC 101917 / NGR234</strain>
    </source>
</reference>
<reference key="3">
    <citation type="journal article" date="2009" name="Appl. Environ. Microbiol.">
        <title>Rhizobium sp. strain NGR234 possesses a remarkable number of secretion systems.</title>
        <authorList>
            <person name="Schmeisser C."/>
            <person name="Liesegang H."/>
            <person name="Krysciak D."/>
            <person name="Bakkou N."/>
            <person name="Le Quere A."/>
            <person name="Wollherr A."/>
            <person name="Heinemeyer I."/>
            <person name="Morgenstern B."/>
            <person name="Pommerening-Roeser A."/>
            <person name="Flores M."/>
            <person name="Palacios R."/>
            <person name="Brenner S."/>
            <person name="Gottschalk G."/>
            <person name="Schmitz R.A."/>
            <person name="Broughton W.J."/>
            <person name="Perret X."/>
            <person name="Strittmatter A.W."/>
            <person name="Streit W.R."/>
        </authorList>
    </citation>
    <scope>NUCLEOTIDE SEQUENCE [LARGE SCALE GENOMIC DNA]</scope>
    <source>
        <strain>NBRC 101917 / NGR234</strain>
    </source>
</reference>
<reference key="4">
    <citation type="journal article" date="1990" name="Mol. Plant Microbe Interact.">
        <title>nodSU, two new nod genes of the broad host range Rhizobium strain NGR234 encode host-specific nodulation of the tropical tree Leucaena leucocephala.</title>
        <authorList>
            <person name="Lewin A."/>
            <person name="Cervantes E."/>
            <person name="Wong C.-H."/>
            <person name="Broughton W.J."/>
        </authorList>
    </citation>
    <scope>NUCLEOTIDE SEQUENCE [GENOMIC DNA] OF 1-9</scope>
</reference>
<sequence>MRVCGIKLTHDGAIAVVEDGRLVFCTEQEKRNNNSRYQEINNLDAVVAALAENGVNARDVDQFVIDGWDGEAESQFKVLSGETPVILRGAPYVERHAEGLLDWIGGSGLTLGDRVFSYRSYPHVTSHVASAYCTSPFAKSGDPALCLVWDGCIFPRLYHVEGKRASFVKSLFPVTGQAYAAAGHYFGPYKQTSRGGWDLGVAGKLMAFIALGSVHERIVAVFQKLYQEHFAGDTALACAFRANINNSESSLAAVHDFFAASALQLGAEAPEDVLASSHFFLERLLVDEMANALQHHPLPGARNLCIAGGCGLNIKWNSALRETGLFDSVWVPPFPNDSGSAIGAACCEIVAQQGFVPLDWSVYSGPSLQAGKVPAGWHASPCSISEVAAILASNKPVVFLSGRSELGPRALGGRSILAAATSPEMKDHLNEIKFREHFRPVAPICLEDRAPDIFSPGTPDPYMLFDHQTKMPWQDKVPAVVHLDGSARLQTISRNSQHKVAEVLVEYEKLTGIPLLCNTSANYHGRGFFPSAAAACEWGRVEHVWCDGMLYRKPSATA</sequence>
<gene>
    <name type="primary">nodU</name>
    <name type="ordered locus">NGR_a02400</name>
    <name type="ORF">y4nB</name>
</gene>
<feature type="chain" id="PRO_0000207850" description="Nodulation protein U">
    <location>
        <begin position="1"/>
        <end position="558"/>
    </location>
</feature>
<protein>
    <recommendedName>
        <fullName>Nodulation protein U</fullName>
        <ecNumber>2.1.3.-</ecNumber>
    </recommendedName>
</protein>
<organism>
    <name type="scientific">Sinorhizobium fredii (strain NBRC 101917 / NGR234)</name>
    <dbReference type="NCBI Taxonomy" id="394"/>
    <lineage>
        <taxon>Bacteria</taxon>
        <taxon>Pseudomonadati</taxon>
        <taxon>Pseudomonadota</taxon>
        <taxon>Alphaproteobacteria</taxon>
        <taxon>Hyphomicrobiales</taxon>
        <taxon>Rhizobiaceae</taxon>
        <taxon>Sinorhizobium/Ensifer group</taxon>
        <taxon>Sinorhizobium</taxon>
    </lineage>
</organism>
<comment type="function">
    <text>Involved in 6-O-carbamoylation of Nod-factors.</text>
</comment>
<comment type="similarity">
    <text evidence="1">Belongs to the NodU/CmcH family.</text>
</comment>
<geneLocation type="plasmid">
    <name>sym pNGR234a</name>
</geneLocation>
<keyword id="KW-0536">Nodulation</keyword>
<keyword id="KW-0614">Plasmid</keyword>
<keyword id="KW-1185">Reference proteome</keyword>
<keyword id="KW-0808">Transferase</keyword>